<keyword id="KW-0002">3D-structure</keyword>
<keyword id="KW-0025">Alternative splicing</keyword>
<keyword id="KW-0227">DNA damage</keyword>
<keyword id="KW-0234">DNA repair</keyword>
<keyword id="KW-0235">DNA replication</keyword>
<keyword id="KW-0237">DNA synthesis</keyword>
<keyword id="KW-0238">DNA-binding</keyword>
<keyword id="KW-0239">DNA-directed DNA polymerase</keyword>
<keyword id="KW-0460">Magnesium</keyword>
<keyword id="KW-0464">Manganese</keyword>
<keyword id="KW-0479">Metal-binding</keyword>
<keyword id="KW-0515">Mutator protein</keyword>
<keyword id="KW-0548">Nucleotidyltransferase</keyword>
<keyword id="KW-0539">Nucleus</keyword>
<keyword id="KW-1185">Reference proteome</keyword>
<keyword id="KW-0704">Schiff base</keyword>
<keyword id="KW-0808">Transferase</keyword>
<keyword id="KW-0832">Ubl conjugation</keyword>
<reference key="1">
    <citation type="journal article" date="1999" name="Genomics">
        <title>Novel human and mouse homologs of Saccharomyces cerevisiae DNA polymerase eta.</title>
        <authorList>
            <person name="McDonald J.P."/>
            <person name="Rapic-Otrin V."/>
            <person name="Epstein J.A."/>
            <person name="Broughton B.C."/>
            <person name="Wang X."/>
            <person name="Lehmann A.R."/>
            <person name="Wolgemuth D.J."/>
            <person name="Woodgate R."/>
        </authorList>
    </citation>
    <scope>NUCLEOTIDE SEQUENCE [MRNA] (ISOFORM 1)</scope>
    <scope>VARIANTS SER-4; ARG-7 AND SER-518</scope>
    <scope>TISSUE SPECIFICITY</scope>
    <source>
        <strain>BALB/cJ</strain>
        <tissue>Testis</tissue>
    </source>
</reference>
<reference key="2">
    <citation type="journal article" date="2004" name="Cancer Res.">
        <title>Pol iota is a candidate for the mouse pulmonary adenoma resistance 2 locus, a major modifier of chemically induced lung neoplasia.</title>
        <authorList>
            <person name="Wang M."/>
            <person name="Devereux T.R."/>
            <person name="Vikis H.G."/>
            <person name="McCulloch S.D."/>
            <person name="Holliday W."/>
            <person name="Anna C."/>
            <person name="Wang Y."/>
            <person name="Bebenek K."/>
            <person name="Kunkel T.A."/>
            <person name="Guan K."/>
            <person name="You M."/>
        </authorList>
    </citation>
    <scope>NUCLEOTIDE SEQUENCE [MRNA] (ISOFORM 1)</scope>
    <scope>FUNCTION</scope>
    <scope>CATALYTIC ACTIVITY</scope>
    <scope>VARIANTS SER-4; ARG-7; LYS-334; ALA-378; SER-518; TYR-524; GLU-569; ASP-574; ARG-606 AND ILE-643</scope>
    <scope>ALTERNATIVE SPLICING</scope>
    <source>
        <strain>A/J</strain>
        <strain>BALB/cJ</strain>
    </source>
</reference>
<reference key="3">
    <citation type="journal article" date="2004" name="Genome Res.">
        <title>The status, quality, and expansion of the NIH full-length cDNA project: the Mammalian Gene Collection (MGC).</title>
        <authorList>
            <consortium name="The MGC Project Team"/>
        </authorList>
    </citation>
    <scope>NUCLEOTIDE SEQUENCE [LARGE SCALE MRNA] (ISOFORM 2)</scope>
    <scope>VARIANT SER-518</scope>
    <source>
        <strain>C57BL/6J</strain>
        <tissue>Embryo</tissue>
    </source>
</reference>
<reference key="4">
    <citation type="journal article" date="2003" name="EMBO J.">
        <title>Mouse Rev1 protein interacts with multiple DNA polymerases involved in translesion DNA synthesis.</title>
        <authorList>
            <person name="Guo C."/>
            <person name="Fischhaber P.L."/>
            <person name="Luk-Paszyc M.J."/>
            <person name="Masuda Y."/>
            <person name="Zhou J."/>
            <person name="Kamiya K."/>
            <person name="Kisker C."/>
            <person name="Friedberg E.C."/>
        </authorList>
    </citation>
    <scope>INTERACTION WITH REV1</scope>
</reference>
<reference key="5">
    <citation type="journal article" date="2005" name="Science">
        <title>Ubiquitin-binding domains in Y-family polymerases regulate translesion synthesis.</title>
        <authorList>
            <person name="Bienko M."/>
            <person name="Green C.M."/>
            <person name="Crosetto N."/>
            <person name="Rudolf F."/>
            <person name="Zapart G."/>
            <person name="Coull B."/>
            <person name="Kannouche P."/>
            <person name="Wider G."/>
            <person name="Peter M."/>
            <person name="Lehmann A.R."/>
            <person name="Hofmann K."/>
            <person name="Dikic I."/>
        </authorList>
    </citation>
    <scope>FUNCTION</scope>
    <scope>INTERACTION WITH UBIQUITIN</scope>
    <scope>SUBCELLULAR LOCATION</scope>
    <scope>UBIQUITINATION</scope>
    <scope>MOTIF</scope>
    <scope>MUTAGENESIS OF LEU-508; PRO-509; LEU-693; PRO-694; 496-LEU--ASN-524 AND 681-PHE--GLY-709</scope>
</reference>
<protein>
    <recommendedName>
        <fullName>DNA polymerase iota</fullName>
        <ecNumber evidence="7">2.7.7.7</ecNumber>
    </recommendedName>
    <alternativeName>
        <fullName>Rad30 homolog B</fullName>
    </alternativeName>
</protein>
<gene>
    <name type="primary">Poli</name>
    <name type="synonym">Rad30b</name>
</gene>
<organism>
    <name type="scientific">Mus musculus</name>
    <name type="common">Mouse</name>
    <dbReference type="NCBI Taxonomy" id="10090"/>
    <lineage>
        <taxon>Eukaryota</taxon>
        <taxon>Metazoa</taxon>
        <taxon>Chordata</taxon>
        <taxon>Craniata</taxon>
        <taxon>Vertebrata</taxon>
        <taxon>Euteleostomi</taxon>
        <taxon>Mammalia</taxon>
        <taxon>Eutheria</taxon>
        <taxon>Euarchontoglires</taxon>
        <taxon>Glires</taxon>
        <taxon>Rodentia</taxon>
        <taxon>Myomorpha</taxon>
        <taxon>Muroidea</taxon>
        <taxon>Muridae</taxon>
        <taxon>Murinae</taxon>
        <taxon>Mus</taxon>
        <taxon>Mus</taxon>
    </lineage>
</organism>
<dbReference type="EC" id="2.7.7.7" evidence="7"/>
<dbReference type="EMBL" id="AF151691">
    <property type="protein sequence ID" value="AAD50424.1"/>
    <property type="molecule type" value="mRNA"/>
</dbReference>
<dbReference type="EMBL" id="AY515316">
    <property type="protein sequence ID" value="AAS75834.1"/>
    <property type="molecule type" value="mRNA"/>
</dbReference>
<dbReference type="EMBL" id="AY515317">
    <property type="protein sequence ID" value="AAS75835.1"/>
    <property type="molecule type" value="mRNA"/>
</dbReference>
<dbReference type="EMBL" id="BC082278">
    <property type="protein sequence ID" value="AAH82278.1"/>
    <property type="molecule type" value="mRNA"/>
</dbReference>
<dbReference type="CCDS" id="CCDS50317.1">
    <molecule id="Q6R3M4-2"/>
</dbReference>
<dbReference type="RefSeq" id="NP_001129562.1">
    <property type="nucleotide sequence ID" value="NM_001136090.2"/>
</dbReference>
<dbReference type="RefSeq" id="NP_001276444.1">
    <property type="nucleotide sequence ID" value="NM_001289515.1"/>
</dbReference>
<dbReference type="RefSeq" id="NP_001276445.1">
    <property type="nucleotide sequence ID" value="NM_001289516.1"/>
</dbReference>
<dbReference type="RefSeq" id="XP_006526009.1">
    <property type="nucleotide sequence ID" value="XM_006525946.3"/>
</dbReference>
<dbReference type="PDB" id="2KWU">
    <property type="method" value="NMR"/>
    <property type="chains" value="A=673-717"/>
</dbReference>
<dbReference type="PDB" id="2KWV">
    <property type="method" value="NMR"/>
    <property type="chains" value="A=487-532"/>
</dbReference>
<dbReference type="PDB" id="3AI4">
    <property type="method" value="X-ray"/>
    <property type="resolution" value="1.60 A"/>
    <property type="chains" value="A=668-717"/>
</dbReference>
<dbReference type="PDBsum" id="2KWU"/>
<dbReference type="PDBsum" id="2KWV"/>
<dbReference type="PDBsum" id="3AI4"/>
<dbReference type="BMRB" id="Q6R3M4"/>
<dbReference type="SMR" id="Q6R3M4"/>
<dbReference type="BioGRID" id="204998">
    <property type="interactions" value="6"/>
</dbReference>
<dbReference type="FunCoup" id="Q6R3M4">
    <property type="interactions" value="1862"/>
</dbReference>
<dbReference type="IntAct" id="Q6R3M4">
    <property type="interactions" value="1"/>
</dbReference>
<dbReference type="STRING" id="10090.ENSMUSP00000112563"/>
<dbReference type="BindingDB" id="Q6R3M4"/>
<dbReference type="ChEMBL" id="CHEMBL5159"/>
<dbReference type="GlyGen" id="Q6R3M4">
    <property type="glycosylation" value="2 sites"/>
</dbReference>
<dbReference type="iPTMnet" id="Q6R3M4"/>
<dbReference type="PhosphoSitePlus" id="Q6R3M4"/>
<dbReference type="PaxDb" id="10090-ENSMUSP00000112563"/>
<dbReference type="ProteomicsDB" id="289945">
    <molecule id="Q6R3M4-1"/>
</dbReference>
<dbReference type="ProteomicsDB" id="289946">
    <molecule id="Q6R3M4-2"/>
</dbReference>
<dbReference type="GeneID" id="26447"/>
<dbReference type="KEGG" id="mmu:26447"/>
<dbReference type="AGR" id="MGI:1347081"/>
<dbReference type="CTD" id="11201"/>
<dbReference type="MGI" id="MGI:1347081">
    <property type="gene designation" value="Poli"/>
</dbReference>
<dbReference type="eggNOG" id="KOG2095">
    <property type="taxonomic scope" value="Eukaryota"/>
</dbReference>
<dbReference type="InParanoid" id="Q6R3M4"/>
<dbReference type="OrthoDB" id="447129at2759"/>
<dbReference type="PhylomeDB" id="Q6R3M4"/>
<dbReference type="Reactome" id="R-MMU-5656121">
    <property type="pathway name" value="Translesion synthesis by POLI"/>
</dbReference>
<dbReference type="Reactome" id="R-MMU-5656169">
    <property type="pathway name" value="Termination of translesion DNA synthesis"/>
</dbReference>
<dbReference type="BioGRID-ORCS" id="26447">
    <property type="hits" value="1 hit in 113 CRISPR screens"/>
</dbReference>
<dbReference type="EvolutionaryTrace" id="Q6R3M4"/>
<dbReference type="PRO" id="PR:Q6R3M4"/>
<dbReference type="Proteomes" id="UP000000589">
    <property type="component" value="Unplaced"/>
</dbReference>
<dbReference type="RNAct" id="Q6R3M4">
    <property type="molecule type" value="protein"/>
</dbReference>
<dbReference type="GO" id="GO:0005634">
    <property type="term" value="C:nucleus"/>
    <property type="evidence" value="ECO:0007669"/>
    <property type="project" value="UniProtKB-SubCell"/>
</dbReference>
<dbReference type="GO" id="GO:0003684">
    <property type="term" value="F:damaged DNA binding"/>
    <property type="evidence" value="ECO:0007669"/>
    <property type="project" value="InterPro"/>
</dbReference>
<dbReference type="GO" id="GO:0003887">
    <property type="term" value="F:DNA-directed DNA polymerase activity"/>
    <property type="evidence" value="ECO:0000314"/>
    <property type="project" value="MGI"/>
</dbReference>
<dbReference type="GO" id="GO:0046872">
    <property type="term" value="F:metal ion binding"/>
    <property type="evidence" value="ECO:0007669"/>
    <property type="project" value="UniProtKB-KW"/>
</dbReference>
<dbReference type="GO" id="GO:0071494">
    <property type="term" value="P:cellular response to UV-C"/>
    <property type="evidence" value="ECO:0000315"/>
    <property type="project" value="MGI"/>
</dbReference>
<dbReference type="GO" id="GO:0006260">
    <property type="term" value="P:DNA replication"/>
    <property type="evidence" value="ECO:0007669"/>
    <property type="project" value="UniProtKB-KW"/>
</dbReference>
<dbReference type="GO" id="GO:0019985">
    <property type="term" value="P:translesion synthesis"/>
    <property type="evidence" value="ECO:0000315"/>
    <property type="project" value="MGI"/>
</dbReference>
<dbReference type="CDD" id="cd01703">
    <property type="entry name" value="PolY_Pol_iota"/>
    <property type="match status" value="1"/>
</dbReference>
<dbReference type="FunFam" id="3.40.1170.60:FF:000007">
    <property type="entry name" value="DNA polymerase iota"/>
    <property type="match status" value="1"/>
</dbReference>
<dbReference type="FunFam" id="3.30.1490.100:FF:000003">
    <property type="entry name" value="Polymerase (DNA directed) iota"/>
    <property type="match status" value="1"/>
</dbReference>
<dbReference type="FunFam" id="3.30.70.270:FF:000013">
    <property type="entry name" value="Polymerase (DNA directed) iota"/>
    <property type="match status" value="1"/>
</dbReference>
<dbReference type="Gene3D" id="3.30.70.270">
    <property type="match status" value="1"/>
</dbReference>
<dbReference type="Gene3D" id="3.40.1170.60">
    <property type="match status" value="1"/>
</dbReference>
<dbReference type="Gene3D" id="6.10.250.1630">
    <property type="match status" value="2"/>
</dbReference>
<dbReference type="Gene3D" id="1.10.150.20">
    <property type="entry name" value="5' to 3' exonuclease, C-terminal subdomain"/>
    <property type="match status" value="1"/>
</dbReference>
<dbReference type="Gene3D" id="3.30.1490.100">
    <property type="entry name" value="DNA polymerase, Y-family, little finger domain"/>
    <property type="match status" value="1"/>
</dbReference>
<dbReference type="InterPro" id="IPR043502">
    <property type="entry name" value="DNA/RNA_pol_sf"/>
</dbReference>
<dbReference type="InterPro" id="IPR036775">
    <property type="entry name" value="DNA_pol_Y-fam_lit_finger_sf"/>
</dbReference>
<dbReference type="InterPro" id="IPR017961">
    <property type="entry name" value="DNA_pol_Y-fam_little_finger"/>
</dbReference>
<dbReference type="InterPro" id="IPR025527">
    <property type="entry name" value="HUWE1/Rev1_UBM"/>
</dbReference>
<dbReference type="InterPro" id="IPR053848">
    <property type="entry name" value="IMS_HHH_1"/>
</dbReference>
<dbReference type="InterPro" id="IPR043128">
    <property type="entry name" value="Rev_trsase/Diguanyl_cyclase"/>
</dbReference>
<dbReference type="InterPro" id="IPR001126">
    <property type="entry name" value="UmuC"/>
</dbReference>
<dbReference type="PANTHER" id="PTHR46404">
    <property type="entry name" value="DNA POLYMERASE IOTA"/>
    <property type="match status" value="1"/>
</dbReference>
<dbReference type="PANTHER" id="PTHR46404:SF1">
    <property type="entry name" value="DNA POLYMERASE IOTA"/>
    <property type="match status" value="1"/>
</dbReference>
<dbReference type="Pfam" id="PF00817">
    <property type="entry name" value="IMS"/>
    <property type="match status" value="1"/>
</dbReference>
<dbReference type="Pfam" id="PF11799">
    <property type="entry name" value="IMS_C"/>
    <property type="match status" value="1"/>
</dbReference>
<dbReference type="Pfam" id="PF21999">
    <property type="entry name" value="IMS_HHH_1"/>
    <property type="match status" value="1"/>
</dbReference>
<dbReference type="Pfam" id="PF14377">
    <property type="entry name" value="UBM"/>
    <property type="match status" value="2"/>
</dbReference>
<dbReference type="PIRSF" id="PIRSF036603">
    <property type="entry name" value="DPol_eta"/>
    <property type="match status" value="1"/>
</dbReference>
<dbReference type="SUPFAM" id="SSF56672">
    <property type="entry name" value="DNA/RNA polymerases"/>
    <property type="match status" value="1"/>
</dbReference>
<dbReference type="SUPFAM" id="SSF100879">
    <property type="entry name" value="Lesion bypass DNA polymerase (Y-family), little finger domain"/>
    <property type="match status" value="1"/>
</dbReference>
<dbReference type="PROSITE" id="PS50173">
    <property type="entry name" value="UMUC"/>
    <property type="match status" value="1"/>
</dbReference>
<comment type="function">
    <text evidence="2 7 9">Error-prone DNA polymerase specifically involved in DNA repair (PubMed:15026325, PubMed:16357261). Plays an important role in translesion synthesis, where the normal high-fidelity DNA polymerases cannot proceed and DNA synthesis stalls (PubMed:15026325, PubMed:16357261). Favors Hoogsteen base-pairing in the active site. Inserts the correct base with high-fidelity opposite an adenosine template (By similarity). Exhibits low fidelity and efficiency opposite a thymidine template, where it will preferentially insert guanosine (By similarity). May play a role in hypermutation of immunoglobulin genes (By similarity). Forms a Schiff base with 5'-deoxyribose phosphate at abasic sites, but may not have lyase activity (By similarity).</text>
</comment>
<comment type="catalytic activity">
    <reaction evidence="7">
        <text>DNA(n) + a 2'-deoxyribonucleoside 5'-triphosphate = DNA(n+1) + diphosphate</text>
        <dbReference type="Rhea" id="RHEA:22508"/>
        <dbReference type="Rhea" id="RHEA-COMP:17339"/>
        <dbReference type="Rhea" id="RHEA-COMP:17340"/>
        <dbReference type="ChEBI" id="CHEBI:33019"/>
        <dbReference type="ChEBI" id="CHEBI:61560"/>
        <dbReference type="ChEBI" id="CHEBI:173112"/>
        <dbReference type="EC" id="2.7.7.7"/>
    </reaction>
</comment>
<comment type="cofactor">
    <cofactor evidence="2">
        <name>Mg(2+)</name>
        <dbReference type="ChEBI" id="CHEBI:18420"/>
    </cofactor>
    <cofactor evidence="2">
        <name>Mn(2+)</name>
        <dbReference type="ChEBI" id="CHEBI:29035"/>
    </cofactor>
    <text evidence="2">Binds nucleotide much more tightly and catalyzes nucleotide insertion much more efficiently in the presence of Mg(2+) than in the presence of Mn(2+).</text>
</comment>
<comment type="subunit">
    <text evidence="2 6 9">Interacts with POLH (By similarity). Interacts with REV1 (PubMed:14657033). Interacts with ubiquitin (PubMed:16357261).</text>
</comment>
<comment type="subcellular location">
    <subcellularLocation>
        <location evidence="1">Nucleus</location>
    </subcellularLocation>
    <text evidence="9">Binding to ubiquitin mediates localization to replication forks after UV-induced DNA damage.</text>
</comment>
<comment type="alternative products">
    <event type="alternative splicing"/>
    <isoform>
        <id>Q6R3M4-1</id>
        <name>1</name>
        <sequence type="displayed"/>
    </isoform>
    <isoform>
        <id>Q6R3M4-2</id>
        <name>2</name>
        <sequence type="described" ref="VSP_012800"/>
    </isoform>
</comment>
<comment type="tissue specificity">
    <text evidence="5">Detected in testis, and at very low levels in spleen, lung and brain. Detected in round spermatids, but not in prophase spermatocytes.</text>
</comment>
<comment type="domain">
    <text evidence="2">The catalytic core consists of fingers, palm and thumb subdomains, but the fingers and thumb subdomains are much smaller than in high-fidelity polymerases; residues from five sequence motifs of the Y-family cluster around an active site cleft that can accommodate DNA and nucleotide substrates with relaxed geometric constraints, with consequently higher rates of misincorporation and low processivity.</text>
</comment>
<comment type="domain">
    <text evidence="9">Ubiquitin-binding motif 1 and ubiquitin-binding motif 2 regulate POLI protein monoubiquitination and localization to nuclear foci after UV-induced DNA damage.</text>
</comment>
<comment type="PTM">
    <text evidence="9">Monoubiquitinated (PubMed:16357261). Protein monoubiquitination prevents POLI binding to ubiquitin via the ubiquitin-binding motif 1 and ubiquitin-binding motif 2 (PubMed:16357261).</text>
</comment>
<comment type="similarity">
    <text evidence="11">Belongs to the DNA polymerase type-Y family.</text>
</comment>
<name>POLI_MOUSE</name>
<feature type="chain" id="PRO_0000173989" description="DNA polymerase iota">
    <location>
        <begin position="1"/>
        <end position="717"/>
    </location>
</feature>
<feature type="domain" description="UmuC" evidence="3">
    <location>
        <begin position="30"/>
        <end position="243"/>
    </location>
</feature>
<feature type="region of interest" description="Disordered" evidence="4">
    <location>
        <begin position="1"/>
        <end position="22"/>
    </location>
</feature>
<feature type="region of interest" description="DNA-binding" evidence="2">
    <location>
        <begin position="300"/>
        <end position="307"/>
    </location>
</feature>
<feature type="region of interest" description="DNA-binding" evidence="2">
    <location>
        <begin position="343"/>
        <end position="360"/>
    </location>
</feature>
<feature type="region of interest" description="Disordered" evidence="4">
    <location>
        <begin position="549"/>
        <end position="589"/>
    </location>
</feature>
<feature type="region of interest" description="Disordered" evidence="4">
    <location>
        <begin position="603"/>
        <end position="622"/>
    </location>
</feature>
<feature type="region of interest" description="Disordered" evidence="4">
    <location>
        <begin position="644"/>
        <end position="687"/>
    </location>
</feature>
<feature type="short sequence motif" description="Ubiquitin-binding 1 (UBM1)" evidence="9">
    <location>
        <begin position="500"/>
        <end position="517"/>
    </location>
</feature>
<feature type="short sequence motif" description="Ubiquitin-binding 2 (UBM2)" evidence="9">
    <location>
        <begin position="685"/>
        <end position="702"/>
    </location>
</feature>
<feature type="compositionally biased region" description="Low complexity" evidence="4">
    <location>
        <begin position="575"/>
        <end position="589"/>
    </location>
</feature>
<feature type="compositionally biased region" description="Polar residues" evidence="4">
    <location>
        <begin position="607"/>
        <end position="622"/>
    </location>
</feature>
<feature type="compositionally biased region" description="Polar residues" evidence="4">
    <location>
        <begin position="652"/>
        <end position="662"/>
    </location>
</feature>
<feature type="compositionally biased region" description="Basic and acidic residues" evidence="4">
    <location>
        <begin position="665"/>
        <end position="679"/>
    </location>
</feature>
<feature type="active site" description="Proton acceptor" evidence="3">
    <location>
        <position position="127"/>
    </location>
</feature>
<feature type="binding site" evidence="2">
    <location>
        <position position="34"/>
    </location>
    <ligand>
        <name>Mg(2+)</name>
        <dbReference type="ChEBI" id="CHEBI:18420"/>
    </ligand>
</feature>
<feature type="binding site" evidence="2">
    <location>
        <position position="35"/>
    </location>
    <ligand>
        <name>Mg(2+)</name>
        <dbReference type="ChEBI" id="CHEBI:18420"/>
    </ligand>
</feature>
<feature type="binding site" evidence="2">
    <location>
        <position position="39"/>
    </location>
    <ligand>
        <name>a 2'-deoxyribonucleoside 5'-triphosphate</name>
        <dbReference type="ChEBI" id="CHEBI:61560"/>
    </ligand>
</feature>
<feature type="binding site" evidence="2">
    <location>
        <position position="71"/>
    </location>
    <ligand>
        <name>a 2'-deoxyribonucleoside 5'-triphosphate</name>
        <dbReference type="ChEBI" id="CHEBI:61560"/>
    </ligand>
</feature>
<feature type="binding site" evidence="2">
    <location>
        <position position="126"/>
    </location>
    <ligand>
        <name>Mg(2+)</name>
        <dbReference type="ChEBI" id="CHEBI:18420"/>
    </ligand>
</feature>
<feature type="splice variant" id="VSP_012800" description="In isoform 2." evidence="10">
    <location>
        <begin position="1"/>
        <end position="43"/>
    </location>
</feature>
<feature type="sequence variant" description="In strain: BALB/c." evidence="5 7">
    <original>L</original>
    <variation>S</variation>
    <location>
        <position position="4"/>
    </location>
</feature>
<feature type="sequence variant" description="In strain: BALB/c." evidence="5 7">
    <original>G</original>
    <variation>R</variation>
    <location>
        <position position="7"/>
    </location>
</feature>
<feature type="sequence variant" description="In strain: BALB/c." evidence="7">
    <original>Q</original>
    <variation>K</variation>
    <location>
        <position position="334"/>
    </location>
</feature>
<feature type="sequence variant" description="In strain: BALB/c." evidence="7">
    <original>S</original>
    <variation>A</variation>
    <location>
        <position position="378"/>
    </location>
</feature>
<feature type="sequence variant" description="In strain: BALB/c." evidence="5 7 8">
    <original>Y</original>
    <variation>S</variation>
    <location>
        <position position="518"/>
    </location>
</feature>
<feature type="sequence variant" description="In strain: BALB/c." evidence="7">
    <original>N</original>
    <variation>Y</variation>
    <location>
        <position position="524"/>
    </location>
</feature>
<feature type="sequence variant" description="In strain: BALB/c." evidence="7">
    <original>A</original>
    <variation>E</variation>
    <location>
        <position position="569"/>
    </location>
</feature>
<feature type="sequence variant" description="In strain: BALB/c." evidence="7">
    <original>E</original>
    <variation>D</variation>
    <location>
        <position position="574"/>
    </location>
</feature>
<feature type="sequence variant" description="In strain: BALB/c." evidence="7">
    <original>Q</original>
    <variation>R</variation>
    <location>
        <position position="606"/>
    </location>
</feature>
<feature type="sequence variant" description="In strain: BALB/c." evidence="7">
    <original>T</original>
    <variation>I</variation>
    <location>
        <position position="643"/>
    </location>
</feature>
<feature type="mutagenesis site" description="Abolishes ubiquitin binding and localization to nuclear foci after UV-induced DNA damage." evidence="9">
    <location>
        <begin position="496"/>
        <end position="524"/>
    </location>
</feature>
<feature type="mutagenesis site" description="Impairs ubiquitin binding and post-translation modification via ubiquitination; when associated with A-509. Abolishes ubiquitin binding and localization to nuclear foci after UV-induced DNA damage but does not affect catalytic activity; when associated with A-508, A-693 and A-694." evidence="9">
    <original>L</original>
    <variation>A</variation>
    <location>
        <position position="508"/>
    </location>
</feature>
<feature type="mutagenesis site" description="Impairs ubiquitin binding and post-translation modification via ubiquitination; when associated with A-508. Abolishes ubiquitin binding and localization to nuclear foci after UV-induced DNA damage but does not affect catalytic activity; when associated with A-509, A-693 and A-694." evidence="9">
    <original>P</original>
    <variation>A</variation>
    <location>
        <position position="509"/>
    </location>
</feature>
<feature type="mutagenesis site" description="Abolishes ubiquitin binding and localization to nuclear foci after UV-induced DNA damage." evidence="9">
    <location>
        <begin position="681"/>
        <end position="709"/>
    </location>
</feature>
<feature type="mutagenesis site" description="Impairs ubiquitin binding and post-translation modification via ubiquitination; when associated with A-694. Abolishes ubiquitin binding and localization to nuclear foci after UV-induced DNA damage but does not affect catalytic activity; when associated with A-508, A-509 and A-694." evidence="9">
    <original>L</original>
    <variation>A</variation>
    <location>
        <position position="693"/>
    </location>
</feature>
<feature type="mutagenesis site" description="Impairs ubiquitin binding and post-translation modification via ubiquitination; when associated with A-693. Abolishes ubiquitin binding and localization to nuclear foci after UV-induced DNA damage but does not affect catalytic activity; when associated with A-508, A-509 and A-693." evidence="9">
    <original>P</original>
    <variation>A</variation>
    <location>
        <position position="694"/>
    </location>
</feature>
<feature type="sequence conflict" description="In Ref. 1; AAD50424." evidence="11" ref="1">
    <original>G</original>
    <variation>R</variation>
    <location>
        <position position="583"/>
    </location>
</feature>
<feature type="helix" evidence="13">
    <location>
        <begin position="502"/>
        <end position="504"/>
    </location>
</feature>
<feature type="turn" evidence="13">
    <location>
        <begin position="505"/>
        <end position="507"/>
    </location>
</feature>
<feature type="helix" evidence="13">
    <location>
        <begin position="510"/>
        <end position="516"/>
    </location>
</feature>
<feature type="strand" evidence="12">
    <location>
        <begin position="682"/>
        <end position="684"/>
    </location>
</feature>
<feature type="helix" evidence="14">
    <location>
        <begin position="687"/>
        <end position="690"/>
    </location>
</feature>
<feature type="helix" evidence="14">
    <location>
        <begin position="695"/>
        <end position="700"/>
    </location>
</feature>
<feature type="helix" evidence="14">
    <location>
        <begin position="701"/>
        <end position="705"/>
    </location>
</feature>
<accession>Q6R3M4</accession>
<accession>Q641P1</accession>
<accession>Q6R3M3</accession>
<accession>Q9R1A6</accession>
<evidence type="ECO:0000250" key="1"/>
<evidence type="ECO:0000250" key="2">
    <source>
        <dbReference type="UniProtKB" id="Q9UNA4"/>
    </source>
</evidence>
<evidence type="ECO:0000255" key="3">
    <source>
        <dbReference type="PROSITE-ProRule" id="PRU00216"/>
    </source>
</evidence>
<evidence type="ECO:0000256" key="4">
    <source>
        <dbReference type="SAM" id="MobiDB-lite"/>
    </source>
</evidence>
<evidence type="ECO:0000269" key="5">
    <source>
    </source>
</evidence>
<evidence type="ECO:0000269" key="6">
    <source>
    </source>
</evidence>
<evidence type="ECO:0000269" key="7">
    <source>
    </source>
</evidence>
<evidence type="ECO:0000269" key="8">
    <source>
    </source>
</evidence>
<evidence type="ECO:0000269" key="9">
    <source>
    </source>
</evidence>
<evidence type="ECO:0000303" key="10">
    <source>
    </source>
</evidence>
<evidence type="ECO:0000305" key="11"/>
<evidence type="ECO:0007829" key="12">
    <source>
        <dbReference type="PDB" id="2KWU"/>
    </source>
</evidence>
<evidence type="ECO:0007829" key="13">
    <source>
        <dbReference type="PDB" id="2KWV"/>
    </source>
</evidence>
<evidence type="ECO:0007829" key="14">
    <source>
        <dbReference type="PDB" id="3AI4"/>
    </source>
</evidence>
<sequence>MEPLHAGAAGSSRAVCSQGPPTQISSSRVIVHVDLDCFYAQVEMISNPELKDRPLGVQQKYLVVTCNYEARKLGVRKLMNVRDAKEKCPQLVLVNGEDLSRYREMSYKVTELLEEFSPAVERLGFDENFVDLTEMVEKRLQQLPSEEVPSVTVFGHVYNNQSVNLHNIMHRRLVVGSQIAAEMREAMYNQLGLTGCAGVAPNKLLAKLVSGVFKPNQQTVLLPESCQHLIHSLNHIKEIPGIGYKTAKRLEVLGINSVHDLQTFPIKTLEKELGIAIAQRIQQLSFGEDKSPVTPSGPPQSFSEEDTFKKCSSEVEAKAKIEELLSSLLTRVCQDGRKPHTVRLVIRRYSDKHCNRESRQCPIPSHVIQKLGTGNHDSMPPLIDILMKLFRNMVNVKMPFHLTLMSVCFCNLKALSSAKKGPMDCYLTSLSTPAYTDKRAFKVKDTHTEDSHKEKEANWDCLPSRRIESTGTGESPLDATCFPKEKDTSDLPLQALPEGVDQEVFKQLPADIQEEILYGKSRENLKGKGSLSCPLHASRGVLSFFSTKQMQASRLSPRDTALPSKRVSAASPCEPGTSGLSPGSTSHPSCGKDCSYYIDSQLKDEQTSQGPTESQGCQFSSTNPAVSGFHSFPNLQTEQLFSTHRTVDSHKQTATASHQGLESHQGLESRELDSAEEKLPFPPDIDPQVFYELPEEVQKELMAEWERAGAARPSAHR</sequence>
<proteinExistence type="evidence at protein level"/>